<geneLocation type="mitochondrion"/>
<organism>
    <name type="scientific">Ovibos moschatus</name>
    <name type="common">Muskox</name>
    <dbReference type="NCBI Taxonomy" id="37176"/>
    <lineage>
        <taxon>Eukaryota</taxon>
        <taxon>Metazoa</taxon>
        <taxon>Chordata</taxon>
        <taxon>Craniata</taxon>
        <taxon>Vertebrata</taxon>
        <taxon>Euteleostomi</taxon>
        <taxon>Mammalia</taxon>
        <taxon>Eutheria</taxon>
        <taxon>Laurasiatheria</taxon>
        <taxon>Artiodactyla</taxon>
        <taxon>Ruminantia</taxon>
        <taxon>Pecora</taxon>
        <taxon>Bovidae</taxon>
        <taxon>Caprinae</taxon>
        <taxon>Ovibos</taxon>
    </lineage>
</organism>
<feature type="chain" id="PRO_0000061334" description="Cytochrome b">
    <location>
        <begin position="1"/>
        <end position="379"/>
    </location>
</feature>
<feature type="transmembrane region" description="Helical" evidence="2">
    <location>
        <begin position="33"/>
        <end position="53"/>
    </location>
</feature>
<feature type="transmembrane region" description="Helical" evidence="2">
    <location>
        <begin position="77"/>
        <end position="98"/>
    </location>
</feature>
<feature type="transmembrane region" description="Helical" evidence="2">
    <location>
        <begin position="113"/>
        <end position="133"/>
    </location>
</feature>
<feature type="transmembrane region" description="Helical" evidence="2">
    <location>
        <begin position="178"/>
        <end position="198"/>
    </location>
</feature>
<feature type="transmembrane region" description="Helical" evidence="2">
    <location>
        <begin position="226"/>
        <end position="246"/>
    </location>
</feature>
<feature type="transmembrane region" description="Helical" evidence="2">
    <location>
        <begin position="288"/>
        <end position="308"/>
    </location>
</feature>
<feature type="transmembrane region" description="Helical" evidence="2">
    <location>
        <begin position="320"/>
        <end position="340"/>
    </location>
</feature>
<feature type="transmembrane region" description="Helical" evidence="2">
    <location>
        <begin position="347"/>
        <end position="367"/>
    </location>
</feature>
<feature type="binding site" description="axial binding residue" evidence="2">
    <location>
        <position position="83"/>
    </location>
    <ligand>
        <name>heme b</name>
        <dbReference type="ChEBI" id="CHEBI:60344"/>
        <label>b562</label>
    </ligand>
    <ligandPart>
        <name>Fe</name>
        <dbReference type="ChEBI" id="CHEBI:18248"/>
    </ligandPart>
</feature>
<feature type="binding site" description="axial binding residue" evidence="2">
    <location>
        <position position="97"/>
    </location>
    <ligand>
        <name>heme b</name>
        <dbReference type="ChEBI" id="CHEBI:60344"/>
        <label>b566</label>
    </ligand>
    <ligandPart>
        <name>Fe</name>
        <dbReference type="ChEBI" id="CHEBI:18248"/>
    </ligandPart>
</feature>
<feature type="binding site" description="axial binding residue" evidence="2">
    <location>
        <position position="182"/>
    </location>
    <ligand>
        <name>heme b</name>
        <dbReference type="ChEBI" id="CHEBI:60344"/>
        <label>b562</label>
    </ligand>
    <ligandPart>
        <name>Fe</name>
        <dbReference type="ChEBI" id="CHEBI:18248"/>
    </ligandPart>
</feature>
<feature type="binding site" description="axial binding residue" evidence="2">
    <location>
        <position position="196"/>
    </location>
    <ligand>
        <name>heme b</name>
        <dbReference type="ChEBI" id="CHEBI:60344"/>
        <label>b566</label>
    </ligand>
    <ligandPart>
        <name>Fe</name>
        <dbReference type="ChEBI" id="CHEBI:18248"/>
    </ligandPart>
</feature>
<feature type="binding site" evidence="2">
    <location>
        <position position="201"/>
    </location>
    <ligand>
        <name>a ubiquinone</name>
        <dbReference type="ChEBI" id="CHEBI:16389"/>
    </ligand>
</feature>
<name>CYB_OVIMO</name>
<accession>Q35273</accession>
<accession>Q5C9H4</accession>
<proteinExistence type="inferred from homology"/>
<reference key="1">
    <citation type="journal article" date="1996" name="Mol. Phylogenet. Evol.">
        <title>Phylogenetics of the Caprinae based on cytochrome b sequence.</title>
        <authorList>
            <person name="Groves P."/>
            <person name="Shields G.F."/>
        </authorList>
    </citation>
    <scope>NUCLEOTIDE SEQUENCE [GENOMIC DNA]</scope>
    <source>
        <tissue>Blood</tissue>
    </source>
</reference>
<reference key="2">
    <citation type="journal article" date="2005" name="J. Zool. Syst. Evol. Res.">
        <title>Molecular phylogeny of caprines (Bovidae, Antilopinae): the question of their origin and diversification during the Miocene.</title>
        <authorList>
            <person name="Ropiquet A."/>
            <person name="Hassanin A."/>
        </authorList>
    </citation>
    <scope>NUCLEOTIDE SEQUENCE [GENOMIC DNA]</scope>
</reference>
<keyword id="KW-0249">Electron transport</keyword>
<keyword id="KW-0349">Heme</keyword>
<keyword id="KW-0408">Iron</keyword>
<keyword id="KW-0472">Membrane</keyword>
<keyword id="KW-0479">Metal-binding</keyword>
<keyword id="KW-0496">Mitochondrion</keyword>
<keyword id="KW-0999">Mitochondrion inner membrane</keyword>
<keyword id="KW-0679">Respiratory chain</keyword>
<keyword id="KW-0812">Transmembrane</keyword>
<keyword id="KW-1133">Transmembrane helix</keyword>
<keyword id="KW-0813">Transport</keyword>
<keyword id="KW-0830">Ubiquinone</keyword>
<comment type="function">
    <text evidence="2">Component of the ubiquinol-cytochrome c reductase complex (complex III or cytochrome b-c1 complex) that is part of the mitochondrial respiratory chain. The b-c1 complex mediates electron transfer from ubiquinol to cytochrome c. Contributes to the generation of a proton gradient across the mitochondrial membrane that is then used for ATP synthesis.</text>
</comment>
<comment type="cofactor">
    <cofactor evidence="2">
        <name>heme b</name>
        <dbReference type="ChEBI" id="CHEBI:60344"/>
    </cofactor>
    <text evidence="2">Binds 2 heme b groups non-covalently.</text>
</comment>
<comment type="subunit">
    <text evidence="2">The cytochrome bc1 complex contains 11 subunits: 3 respiratory subunits (MT-CYB, CYC1 and UQCRFS1), 2 core proteins (UQCRC1 and UQCRC2) and 6 low-molecular weight proteins (UQCRH/QCR6, UQCRB/QCR7, UQCRQ/QCR8, UQCR10/QCR9, UQCR11/QCR10 and a cleavage product of UQCRFS1). This cytochrome bc1 complex then forms a dimer.</text>
</comment>
<comment type="subcellular location">
    <subcellularLocation>
        <location evidence="2">Mitochondrion inner membrane</location>
        <topology evidence="2">Multi-pass membrane protein</topology>
    </subcellularLocation>
</comment>
<comment type="miscellaneous">
    <text evidence="1">Heme 1 (or BL or b562) is low-potential and absorbs at about 562 nm, and heme 2 (or BH or b566) is high-potential and absorbs at about 566 nm.</text>
</comment>
<comment type="similarity">
    <text evidence="3 4">Belongs to the cytochrome b family.</text>
</comment>
<comment type="caution">
    <text evidence="2">The full-length protein contains only eight transmembrane helices, not nine as predicted by bioinformatics tools.</text>
</comment>
<evidence type="ECO:0000250" key="1"/>
<evidence type="ECO:0000250" key="2">
    <source>
        <dbReference type="UniProtKB" id="P00157"/>
    </source>
</evidence>
<evidence type="ECO:0000255" key="3">
    <source>
        <dbReference type="PROSITE-ProRule" id="PRU00967"/>
    </source>
</evidence>
<evidence type="ECO:0000255" key="4">
    <source>
        <dbReference type="PROSITE-ProRule" id="PRU00968"/>
    </source>
</evidence>
<protein>
    <recommendedName>
        <fullName>Cytochrome b</fullName>
    </recommendedName>
    <alternativeName>
        <fullName>Complex III subunit 3</fullName>
    </alternativeName>
    <alternativeName>
        <fullName>Complex III subunit III</fullName>
    </alternativeName>
    <alternativeName>
        <fullName>Cytochrome b-c1 complex subunit 3</fullName>
    </alternativeName>
    <alternativeName>
        <fullName>Ubiquinol-cytochrome-c reductase complex cytochrome b subunit</fullName>
    </alternativeName>
</protein>
<dbReference type="EMBL" id="U17862">
    <property type="protein sequence ID" value="AAC48623.1"/>
    <property type="molecule type" value="Genomic_DNA"/>
</dbReference>
<dbReference type="EMBL" id="AY669322">
    <property type="protein sequence ID" value="AAV85894.1"/>
    <property type="molecule type" value="Genomic_DNA"/>
</dbReference>
<dbReference type="RefSeq" id="YP_007625171.1">
    <property type="nucleotide sequence ID" value="NC_020631.1"/>
</dbReference>
<dbReference type="SMR" id="Q35273"/>
<dbReference type="GeneID" id="14841725"/>
<dbReference type="CTD" id="4519"/>
<dbReference type="GO" id="GO:0005743">
    <property type="term" value="C:mitochondrial inner membrane"/>
    <property type="evidence" value="ECO:0007669"/>
    <property type="project" value="UniProtKB-SubCell"/>
</dbReference>
<dbReference type="GO" id="GO:0045275">
    <property type="term" value="C:respiratory chain complex III"/>
    <property type="evidence" value="ECO:0007669"/>
    <property type="project" value="InterPro"/>
</dbReference>
<dbReference type="GO" id="GO:0046872">
    <property type="term" value="F:metal ion binding"/>
    <property type="evidence" value="ECO:0007669"/>
    <property type="project" value="UniProtKB-KW"/>
</dbReference>
<dbReference type="GO" id="GO:0008121">
    <property type="term" value="F:ubiquinol-cytochrome-c reductase activity"/>
    <property type="evidence" value="ECO:0007669"/>
    <property type="project" value="InterPro"/>
</dbReference>
<dbReference type="GO" id="GO:0006122">
    <property type="term" value="P:mitochondrial electron transport, ubiquinol to cytochrome c"/>
    <property type="evidence" value="ECO:0007669"/>
    <property type="project" value="TreeGrafter"/>
</dbReference>
<dbReference type="CDD" id="cd00290">
    <property type="entry name" value="cytochrome_b_C"/>
    <property type="match status" value="1"/>
</dbReference>
<dbReference type="CDD" id="cd00284">
    <property type="entry name" value="Cytochrome_b_N"/>
    <property type="match status" value="1"/>
</dbReference>
<dbReference type="FunFam" id="1.20.810.10:FF:000002">
    <property type="entry name" value="Cytochrome b"/>
    <property type="match status" value="1"/>
</dbReference>
<dbReference type="Gene3D" id="1.20.810.10">
    <property type="entry name" value="Cytochrome Bc1 Complex, Chain C"/>
    <property type="match status" value="1"/>
</dbReference>
<dbReference type="InterPro" id="IPR005798">
    <property type="entry name" value="Cyt_b/b6_C"/>
</dbReference>
<dbReference type="InterPro" id="IPR036150">
    <property type="entry name" value="Cyt_b/b6_C_sf"/>
</dbReference>
<dbReference type="InterPro" id="IPR005797">
    <property type="entry name" value="Cyt_b/b6_N"/>
</dbReference>
<dbReference type="InterPro" id="IPR027387">
    <property type="entry name" value="Cytb/b6-like_sf"/>
</dbReference>
<dbReference type="InterPro" id="IPR030689">
    <property type="entry name" value="Cytochrome_b"/>
</dbReference>
<dbReference type="InterPro" id="IPR048260">
    <property type="entry name" value="Cytochrome_b_C_euk/bac"/>
</dbReference>
<dbReference type="InterPro" id="IPR048259">
    <property type="entry name" value="Cytochrome_b_N_euk/bac"/>
</dbReference>
<dbReference type="InterPro" id="IPR016174">
    <property type="entry name" value="Di-haem_cyt_TM"/>
</dbReference>
<dbReference type="PANTHER" id="PTHR19271">
    <property type="entry name" value="CYTOCHROME B"/>
    <property type="match status" value="1"/>
</dbReference>
<dbReference type="PANTHER" id="PTHR19271:SF16">
    <property type="entry name" value="CYTOCHROME B"/>
    <property type="match status" value="1"/>
</dbReference>
<dbReference type="Pfam" id="PF00032">
    <property type="entry name" value="Cytochrom_B_C"/>
    <property type="match status" value="1"/>
</dbReference>
<dbReference type="Pfam" id="PF00033">
    <property type="entry name" value="Cytochrome_B"/>
    <property type="match status" value="1"/>
</dbReference>
<dbReference type="PIRSF" id="PIRSF038885">
    <property type="entry name" value="COB"/>
    <property type="match status" value="1"/>
</dbReference>
<dbReference type="SUPFAM" id="SSF81648">
    <property type="entry name" value="a domain/subunit of cytochrome bc1 complex (Ubiquinol-cytochrome c reductase)"/>
    <property type="match status" value="1"/>
</dbReference>
<dbReference type="SUPFAM" id="SSF81342">
    <property type="entry name" value="Transmembrane di-heme cytochromes"/>
    <property type="match status" value="1"/>
</dbReference>
<dbReference type="PROSITE" id="PS51003">
    <property type="entry name" value="CYTB_CTER"/>
    <property type="match status" value="1"/>
</dbReference>
<dbReference type="PROSITE" id="PS51002">
    <property type="entry name" value="CYTB_NTER"/>
    <property type="match status" value="1"/>
</dbReference>
<gene>
    <name type="primary">MT-CYB</name>
    <name type="synonym">COB</name>
    <name type="synonym">CYTB</name>
    <name type="synonym">MTCYB</name>
</gene>
<sequence>MTNIRKTHPLMKIVNNAFIDLPTPSNISSWWNFGSLLGICLILQILTGLFLAMHYTSDTTTAFSSVTHICRDVNYGWIIRYMHANGASMFFICLFMHVGRGLYYGSYTFLETWNMGVILLLMTMATAFMGYVLPWGQMSFWGATVITNLLSAIPYIGTNLVEWIWGGFSVDKATLTRFFAFHFILPFIIVALAMVHLLFLHETGSNNPTGIPSDTDKIPFHPYYTIKDILGAMLLILTLMLLVLFTPDLLGDPDNYTPANPLNTPPHIKPEWYFLFAYAILRSIPNKLGGVLALLLSILILALVPFLHTSKQRSMMFRPISQCMFWMLVADLLTLTWIGGQPVEHPYIIIGQLASIMYFLIILVLMPMASTIENNLLKW</sequence>